<protein>
    <recommendedName>
        <fullName>Protein Rev</fullName>
    </recommendedName>
    <alternativeName>
        <fullName>Regulator of expression of viral proteins</fullName>
    </alternativeName>
</protein>
<proteinExistence type="inferred from homology"/>
<evidence type="ECO:0000250" key="1"/>
<evidence type="ECO:0000256" key="2">
    <source>
        <dbReference type="SAM" id="MobiDB-lite"/>
    </source>
</evidence>
<reference key="1">
    <citation type="submission" date="1995-04" db="EMBL/GenBank/DDBJ databases">
        <authorList>
            <person name="Kraus G.K."/>
            <person name="Talbott R."/>
            <person name="Leavitt M."/>
            <person name="Luznick L."/>
            <person name="Schmidt A."/>
            <person name="Badel P."/>
            <person name="Bartz C."/>
            <person name="Morton W."/>
            <person name="Wong-Staal F."/>
            <person name="Looney D.J."/>
        </authorList>
    </citation>
    <scope>NUCLEOTIDE SEQUENCE [GENOMIC DNA]</scope>
</reference>
<accession>Q74125</accession>
<gene>
    <name type="primary">rev</name>
</gene>
<feature type="chain" id="PRO_0000085286" description="Protein Rev">
    <location>
        <begin position="1"/>
        <end position="179"/>
    </location>
</feature>
<feature type="region of interest" description="Homomultimerization" evidence="1">
    <location>
        <begin position="16"/>
        <end position="24"/>
    </location>
</feature>
<feature type="region of interest" description="Disordered" evidence="2">
    <location>
        <begin position="24"/>
        <end position="44"/>
    </location>
</feature>
<feature type="region of interest" description="Disordered" evidence="2">
    <location>
        <begin position="82"/>
        <end position="102"/>
    </location>
</feature>
<feature type="region of interest" description="Disordered" evidence="2">
    <location>
        <begin position="141"/>
        <end position="179"/>
    </location>
</feature>
<feature type="short sequence motif" description="Nuclear localization signal and RNA-binding (RRE)" evidence="1">
    <location>
        <begin position="35"/>
        <end position="49"/>
    </location>
</feature>
<feature type="short sequence motif" description="Nuclear export signal and binding to XPO1" evidence="1">
    <location>
        <begin position="71"/>
        <end position="82"/>
    </location>
</feature>
<feature type="compositionally biased region" description="Basic residues" evidence="2">
    <location>
        <begin position="34"/>
        <end position="44"/>
    </location>
</feature>
<feature type="compositionally biased region" description="Polar residues" evidence="2">
    <location>
        <begin position="91"/>
        <end position="102"/>
    </location>
</feature>
<sequence>MNGRADEEGLQRKQRLIRLLHQTNPYPQGLGTARQRRNRRRRRKQHWRQLVALANSIYTFPDPPADSPLDRAIQRLQGLTIQELPDPPTNLPESSESTNNNQGLAETYNSLPAIWVRVDPRSAPGPCKDYERDSCERVERLVGGNGTDRQGNTCSSKKDQAGGRTCPPVRGSGINRETL</sequence>
<comment type="function">
    <text evidence="1">Escorts unspliced or incompletely spliced viral pre-mRNAs (late transcripts) out of the nucleus of infected cells. These pre-mRNAs carry a recognition sequence called Rev responsive element (RRE) located in the env gene, that is not present in fully spliced viral mRNAs (early transcripts). This function is essential since most viral proteins are translated from unspliced or partially spliced pre-mRNAs which cannot exit the nucleus by the pathway used by fully processed cellular mRNAs (By similarity).</text>
</comment>
<comment type="subunit">
    <text evidence="1">Homomultimer; when bound to the RRE. Multimeric assembly is essential for activity (By similarity).</text>
</comment>
<comment type="subcellular location">
    <subcellularLocation>
        <location>Host nucleus</location>
        <location>Host nucleolus</location>
    </subcellularLocation>
    <subcellularLocation>
        <location>Host cytoplasm</location>
    </subcellularLocation>
    <text evidence="1">The presence of both nuclear import and nuclear export signals leads to continuous shuttling between the nucleus and cytoplasm.</text>
</comment>
<comment type="domain">
    <text evidence="1">The RNA-binding motif binds to the RRE, a stem-and-loop structure present in incompletely spliced viral pre-mRNAs. This region also contains the NLS which mediates nuclear localization. These overlapping functions prevent Rev bound to RRE from undesirable return to the nucleus. When Rev binds the RRE, the NLS becomes masked while the NES remains accessible (By similarity).</text>
</comment>
<organismHost>
    <name type="scientific">Homo sapiens</name>
    <name type="common">Human</name>
    <dbReference type="NCBI Taxonomy" id="9606"/>
</organismHost>
<name>REV_HV2KR</name>
<organism>
    <name type="scientific">Human immunodeficiency virus type 2 subtype A (isolate KR)</name>
    <name type="common">HIV-2</name>
    <dbReference type="NCBI Taxonomy" id="73484"/>
    <lineage>
        <taxon>Viruses</taxon>
        <taxon>Riboviria</taxon>
        <taxon>Pararnavirae</taxon>
        <taxon>Artverviricota</taxon>
        <taxon>Revtraviricetes</taxon>
        <taxon>Ortervirales</taxon>
        <taxon>Retroviridae</taxon>
        <taxon>Orthoretrovirinae</taxon>
        <taxon>Lentivirus</taxon>
        <taxon>Human immunodeficiency virus 2</taxon>
    </lineage>
</organism>
<dbReference type="EMBL" id="U22047">
    <property type="protein sequence ID" value="AAA64581.1"/>
    <property type="molecule type" value="Genomic_DNA"/>
</dbReference>
<dbReference type="SMR" id="Q74125"/>
<dbReference type="Proteomes" id="UP000007425">
    <property type="component" value="Segment"/>
</dbReference>
<dbReference type="GO" id="GO:0030430">
    <property type="term" value="C:host cell cytoplasm"/>
    <property type="evidence" value="ECO:0007669"/>
    <property type="project" value="UniProtKB-SubCell"/>
</dbReference>
<dbReference type="GO" id="GO:0044196">
    <property type="term" value="C:host cell nucleolus"/>
    <property type="evidence" value="ECO:0007669"/>
    <property type="project" value="UniProtKB-SubCell"/>
</dbReference>
<dbReference type="GO" id="GO:0003700">
    <property type="term" value="F:DNA-binding transcription factor activity"/>
    <property type="evidence" value="ECO:0007669"/>
    <property type="project" value="InterPro"/>
</dbReference>
<dbReference type="GO" id="GO:0003723">
    <property type="term" value="F:RNA binding"/>
    <property type="evidence" value="ECO:0007669"/>
    <property type="project" value="UniProtKB-KW"/>
</dbReference>
<dbReference type="GO" id="GO:0051028">
    <property type="term" value="P:mRNA transport"/>
    <property type="evidence" value="ECO:0007669"/>
    <property type="project" value="UniProtKB-KW"/>
</dbReference>
<dbReference type="Gene3D" id="6.10.140.630">
    <property type="match status" value="1"/>
</dbReference>
<dbReference type="InterPro" id="IPR000625">
    <property type="entry name" value="REV_protein"/>
</dbReference>
<dbReference type="Pfam" id="PF00424">
    <property type="entry name" value="REV"/>
    <property type="match status" value="1"/>
</dbReference>
<keyword id="KW-0014">AIDS</keyword>
<keyword id="KW-1035">Host cytoplasm</keyword>
<keyword id="KW-1048">Host nucleus</keyword>
<keyword id="KW-0509">mRNA transport</keyword>
<keyword id="KW-0694">RNA-binding</keyword>
<keyword id="KW-0813">Transport</keyword>